<comment type="catalytic activity">
    <reaction evidence="1">
        <text>beta-D-fructose 1,6-bisphosphate + H2O = beta-D-fructose 6-phosphate + phosphate</text>
        <dbReference type="Rhea" id="RHEA:11064"/>
        <dbReference type="ChEBI" id="CHEBI:15377"/>
        <dbReference type="ChEBI" id="CHEBI:32966"/>
        <dbReference type="ChEBI" id="CHEBI:43474"/>
        <dbReference type="ChEBI" id="CHEBI:57634"/>
        <dbReference type="EC" id="3.1.3.11"/>
    </reaction>
</comment>
<comment type="cofactor">
    <cofactor evidence="1">
        <name>Mg(2+)</name>
        <dbReference type="ChEBI" id="CHEBI:18420"/>
    </cofactor>
    <text evidence="1">Binds 2 magnesium ions per subunit.</text>
</comment>
<comment type="pathway">
    <text evidence="1">Carbohydrate biosynthesis; gluconeogenesis.</text>
</comment>
<comment type="subunit">
    <text evidence="1">Homotetramer.</text>
</comment>
<comment type="subcellular location">
    <subcellularLocation>
        <location evidence="1">Cytoplasm</location>
    </subcellularLocation>
</comment>
<comment type="similarity">
    <text evidence="1">Belongs to the FBPase class 1 family.</text>
</comment>
<reference key="1">
    <citation type="journal article" date="2009" name="J. Bacteriol.">
        <title>Complete and draft genome sequences of six members of the Aquificales.</title>
        <authorList>
            <person name="Reysenbach A.-L."/>
            <person name="Hamamura N."/>
            <person name="Podar M."/>
            <person name="Griffiths E."/>
            <person name="Ferreira S."/>
            <person name="Hochstein R."/>
            <person name="Heidelberg J."/>
            <person name="Johnson J."/>
            <person name="Mead D."/>
            <person name="Pohorille A."/>
            <person name="Sarmiento M."/>
            <person name="Schweighofer K."/>
            <person name="Seshadri R."/>
            <person name="Voytek M.A."/>
        </authorList>
    </citation>
    <scope>NUCLEOTIDE SEQUENCE [LARGE SCALE GENOMIC DNA]</scope>
    <source>
        <strain>YO3AOP1</strain>
    </source>
</reference>
<evidence type="ECO:0000255" key="1">
    <source>
        <dbReference type="HAMAP-Rule" id="MF_01855"/>
    </source>
</evidence>
<organism>
    <name type="scientific">Sulfurihydrogenibium sp. (strain YO3AOP1)</name>
    <dbReference type="NCBI Taxonomy" id="436114"/>
    <lineage>
        <taxon>Bacteria</taxon>
        <taxon>Pseudomonadati</taxon>
        <taxon>Aquificota</taxon>
        <taxon>Aquificia</taxon>
        <taxon>Aquificales</taxon>
        <taxon>Hydrogenothermaceae</taxon>
        <taxon>Sulfurihydrogenibium</taxon>
    </lineage>
</organism>
<feature type="chain" id="PRO_0000364725" description="Fructose-1,6-bisphosphatase class 1">
    <location>
        <begin position="1"/>
        <end position="323"/>
    </location>
</feature>
<feature type="binding site" evidence="1">
    <location>
        <position position="93"/>
    </location>
    <ligand>
        <name>Mg(2+)</name>
        <dbReference type="ChEBI" id="CHEBI:18420"/>
        <label>1</label>
    </ligand>
</feature>
<feature type="binding site" evidence="1">
    <location>
        <position position="114"/>
    </location>
    <ligand>
        <name>Mg(2+)</name>
        <dbReference type="ChEBI" id="CHEBI:18420"/>
        <label>1</label>
    </ligand>
</feature>
<feature type="binding site" evidence="1">
    <location>
        <position position="114"/>
    </location>
    <ligand>
        <name>Mg(2+)</name>
        <dbReference type="ChEBI" id="CHEBI:18420"/>
        <label>2</label>
    </ligand>
</feature>
<feature type="binding site" evidence="1">
    <location>
        <position position="116"/>
    </location>
    <ligand>
        <name>Mg(2+)</name>
        <dbReference type="ChEBI" id="CHEBI:18420"/>
        <label>1</label>
    </ligand>
</feature>
<feature type="binding site" evidence="1">
    <location>
        <begin position="117"/>
        <end position="120"/>
    </location>
    <ligand>
        <name>substrate</name>
    </ligand>
</feature>
<feature type="binding site" evidence="1">
    <location>
        <position position="117"/>
    </location>
    <ligand>
        <name>Mg(2+)</name>
        <dbReference type="ChEBI" id="CHEBI:18420"/>
        <label>2</label>
    </ligand>
</feature>
<feature type="binding site" evidence="1">
    <location>
        <position position="205"/>
    </location>
    <ligand>
        <name>substrate</name>
    </ligand>
</feature>
<feature type="binding site" evidence="1">
    <location>
        <position position="233"/>
    </location>
    <ligand>
        <name>substrate</name>
    </ligand>
</feature>
<feature type="binding site" evidence="1">
    <location>
        <position position="263"/>
    </location>
    <ligand>
        <name>substrate</name>
    </ligand>
</feature>
<feature type="binding site" evidence="1">
    <location>
        <position position="269"/>
    </location>
    <ligand>
        <name>Mg(2+)</name>
        <dbReference type="ChEBI" id="CHEBI:18420"/>
        <label>2</label>
    </ligand>
</feature>
<keyword id="KW-0119">Carbohydrate metabolism</keyword>
<keyword id="KW-0963">Cytoplasm</keyword>
<keyword id="KW-0378">Hydrolase</keyword>
<keyword id="KW-0460">Magnesium</keyword>
<keyword id="KW-0479">Metal-binding</keyword>
<dbReference type="EC" id="3.1.3.11" evidence="1"/>
<dbReference type="EMBL" id="CP001080">
    <property type="protein sequence ID" value="ACD65674.1"/>
    <property type="molecule type" value="Genomic_DNA"/>
</dbReference>
<dbReference type="RefSeq" id="WP_012458766.1">
    <property type="nucleotide sequence ID" value="NC_010730.1"/>
</dbReference>
<dbReference type="SMR" id="B2V6E2"/>
<dbReference type="STRING" id="436114.SYO3AOP1_0023"/>
<dbReference type="KEGG" id="sul:SYO3AOP1_0023"/>
<dbReference type="eggNOG" id="COG0158">
    <property type="taxonomic scope" value="Bacteria"/>
</dbReference>
<dbReference type="HOGENOM" id="CLU_039977_2_2_0"/>
<dbReference type="UniPathway" id="UPA00138"/>
<dbReference type="GO" id="GO:0005829">
    <property type="term" value="C:cytosol"/>
    <property type="evidence" value="ECO:0007669"/>
    <property type="project" value="TreeGrafter"/>
</dbReference>
<dbReference type="GO" id="GO:0042132">
    <property type="term" value="F:fructose 1,6-bisphosphate 1-phosphatase activity"/>
    <property type="evidence" value="ECO:0007669"/>
    <property type="project" value="UniProtKB-UniRule"/>
</dbReference>
<dbReference type="GO" id="GO:0000287">
    <property type="term" value="F:magnesium ion binding"/>
    <property type="evidence" value="ECO:0007669"/>
    <property type="project" value="UniProtKB-UniRule"/>
</dbReference>
<dbReference type="GO" id="GO:0030388">
    <property type="term" value="P:fructose 1,6-bisphosphate metabolic process"/>
    <property type="evidence" value="ECO:0007669"/>
    <property type="project" value="TreeGrafter"/>
</dbReference>
<dbReference type="GO" id="GO:0006002">
    <property type="term" value="P:fructose 6-phosphate metabolic process"/>
    <property type="evidence" value="ECO:0007669"/>
    <property type="project" value="TreeGrafter"/>
</dbReference>
<dbReference type="GO" id="GO:0006000">
    <property type="term" value="P:fructose metabolic process"/>
    <property type="evidence" value="ECO:0007669"/>
    <property type="project" value="TreeGrafter"/>
</dbReference>
<dbReference type="GO" id="GO:0006094">
    <property type="term" value="P:gluconeogenesis"/>
    <property type="evidence" value="ECO:0007669"/>
    <property type="project" value="UniProtKB-UniRule"/>
</dbReference>
<dbReference type="GO" id="GO:0005986">
    <property type="term" value="P:sucrose biosynthetic process"/>
    <property type="evidence" value="ECO:0007669"/>
    <property type="project" value="TreeGrafter"/>
</dbReference>
<dbReference type="CDD" id="cd00354">
    <property type="entry name" value="FBPase"/>
    <property type="match status" value="1"/>
</dbReference>
<dbReference type="FunFam" id="3.30.540.10:FF:000002">
    <property type="entry name" value="Fructose-1,6-bisphosphatase class 1"/>
    <property type="match status" value="1"/>
</dbReference>
<dbReference type="FunFam" id="3.40.190.80:FF:000001">
    <property type="entry name" value="Fructose-1,6-bisphosphatase class 1"/>
    <property type="match status" value="1"/>
</dbReference>
<dbReference type="Gene3D" id="3.40.190.80">
    <property type="match status" value="1"/>
</dbReference>
<dbReference type="Gene3D" id="3.30.540.10">
    <property type="entry name" value="Fructose-1,6-Bisphosphatase, subunit A, domain 1"/>
    <property type="match status" value="1"/>
</dbReference>
<dbReference type="HAMAP" id="MF_01855">
    <property type="entry name" value="FBPase_class1"/>
    <property type="match status" value="1"/>
</dbReference>
<dbReference type="InterPro" id="IPR044015">
    <property type="entry name" value="FBPase_C_dom"/>
</dbReference>
<dbReference type="InterPro" id="IPR000146">
    <property type="entry name" value="FBPase_class-1"/>
</dbReference>
<dbReference type="InterPro" id="IPR033391">
    <property type="entry name" value="FBPase_N"/>
</dbReference>
<dbReference type="InterPro" id="IPR028343">
    <property type="entry name" value="FBPtase"/>
</dbReference>
<dbReference type="InterPro" id="IPR020548">
    <property type="entry name" value="Fructose_bisphosphatase_AS"/>
</dbReference>
<dbReference type="NCBIfam" id="NF006778">
    <property type="entry name" value="PRK09293.1-1"/>
    <property type="match status" value="1"/>
</dbReference>
<dbReference type="NCBIfam" id="NF006779">
    <property type="entry name" value="PRK09293.1-3"/>
    <property type="match status" value="1"/>
</dbReference>
<dbReference type="PANTHER" id="PTHR11556">
    <property type="entry name" value="FRUCTOSE-1,6-BISPHOSPHATASE-RELATED"/>
    <property type="match status" value="1"/>
</dbReference>
<dbReference type="PANTHER" id="PTHR11556:SF35">
    <property type="entry name" value="SEDOHEPTULOSE-1,7-BISPHOSPHATASE, CHLOROPLASTIC"/>
    <property type="match status" value="1"/>
</dbReference>
<dbReference type="Pfam" id="PF00316">
    <property type="entry name" value="FBPase"/>
    <property type="match status" value="1"/>
</dbReference>
<dbReference type="Pfam" id="PF18913">
    <property type="entry name" value="FBPase_C"/>
    <property type="match status" value="1"/>
</dbReference>
<dbReference type="PIRSF" id="PIRSF500210">
    <property type="entry name" value="FBPtase"/>
    <property type="match status" value="1"/>
</dbReference>
<dbReference type="PIRSF" id="PIRSF000904">
    <property type="entry name" value="FBPtase_SBPase"/>
    <property type="match status" value="1"/>
</dbReference>
<dbReference type="PRINTS" id="PR00115">
    <property type="entry name" value="F16BPHPHTASE"/>
</dbReference>
<dbReference type="SUPFAM" id="SSF56655">
    <property type="entry name" value="Carbohydrate phosphatase"/>
    <property type="match status" value="1"/>
</dbReference>
<dbReference type="PROSITE" id="PS00124">
    <property type="entry name" value="FBPASE"/>
    <property type="match status" value="1"/>
</dbReference>
<accession>B2V6E2</accession>
<proteinExistence type="inferred from homology"/>
<sequence length="323" mass="35375">MAKIGMDLNSFILEQERLYPNATGSLSRALVAIESATKVIASHVRMAGLADILGMAGKKNIQGEEVQKLDELSNNLLIQYLSQSGEFFALASEELDEPIFPEEGKDAKYVIAFDPLDGSSNIDVNISIGTIFSIHRRVNSDVSDFLQEGYKQVAAGYVIYGSSTMLVLSTGNGVNGFTLDPAVGMYLLSHPNMKIPEKGKIYSINESNDKKWIDAGLKEYIESLKDEGYTSRYIGSMVADVHRTLIKGGIFAYPADVKNKNGKLRLLYEASPMAFLTVQAGGIATTGKEDILNIKPTDIHQRVPVFLGGKYEMEKLKSMLKNG</sequence>
<gene>
    <name evidence="1" type="primary">fbp</name>
    <name type="ordered locus">SYO3AOP1_0023</name>
</gene>
<name>F16PA_SULSY</name>
<protein>
    <recommendedName>
        <fullName evidence="1">Fructose-1,6-bisphosphatase class 1</fullName>
        <shortName evidence="1">FBPase class 1</shortName>
        <ecNumber evidence="1">3.1.3.11</ecNumber>
    </recommendedName>
    <alternativeName>
        <fullName evidence="1">D-fructose-1,6-bisphosphate 1-phosphohydrolase class 1</fullName>
    </alternativeName>
</protein>